<organism>
    <name type="scientific">Homo sapiens</name>
    <name type="common">Human</name>
    <dbReference type="NCBI Taxonomy" id="9606"/>
    <lineage>
        <taxon>Eukaryota</taxon>
        <taxon>Metazoa</taxon>
        <taxon>Chordata</taxon>
        <taxon>Craniata</taxon>
        <taxon>Vertebrata</taxon>
        <taxon>Euteleostomi</taxon>
        <taxon>Mammalia</taxon>
        <taxon>Eutheria</taxon>
        <taxon>Euarchontoglires</taxon>
        <taxon>Primates</taxon>
        <taxon>Haplorrhini</taxon>
        <taxon>Catarrhini</taxon>
        <taxon>Hominidae</taxon>
        <taxon>Homo</taxon>
    </lineage>
</organism>
<sequence length="363" mass="41850">MNRHHLQDHFLEIDKKNCCVFRDDFIVKVLPPVLGLEFIFGLLGNGLALWIFCFHLKSWKSSRIFLFNLAVADFLLIICLPFLMDNYVRRWDWKFGDIPCRLMLFMLAMNRQGSIIFLTVVAVDRYFRVVHPHHALNKISNRTAAIISCLLWGITIGLTVHLLKKKMPIQNGGANLCSSFSICHTFQWHEAMFLLEFFLPLGIILFCSARIIWSLRQRQMDRHAKIKRAITFIMVVAIVFVICFLPSVVVRIRIFWLLHTSGTQNCEVYRSVDLAFFITLSFTYMNSMLDPVVYYFSSPSFPNFFSTLINRCLQRKMTGEPDNNRSTSVELTGDPNKTRGAPEALMANSGEPWSPSYLGPTSP</sequence>
<comment type="function">
    <text evidence="6">Acts as a high affinity receptor for both nicotinic acid (also known as niacin) and (D)-beta-hydroxybutyrate and mediates increased adiponectin secretion and decreased lipolysis through G(i)-protein-mediated inhibition of adenylyl cyclase. This pharmacological effect requires nicotinic acid doses that are much higher than those provided by a normal diet. Mediates nicotinic acid-induced apoptosis in mature neutrophils. Receptor activation by nicotinic acid results in reduced cAMP levels which may affect activity of cAMP-dependent protein kinase A and phosphorylation of target proteins, leading to neutrophil apoptosis. The rank order of potency for the displacement of nicotinic acid binding is 5-methyl pyrazole-3-carboxylic acid = pyridine-3-acetic acid &gt; acifran &gt; 5-methyl nicotinic acid = acipimox &gt;&gt; nicotinuric acid = nicotinamide.</text>
</comment>
<comment type="subcellular location">
    <subcellularLocation>
        <location evidence="6">Cell membrane</location>
        <topology evidence="6">Multi-pass membrane protein</topology>
    </subcellularLocation>
</comment>
<comment type="tissue specificity">
    <text evidence="5 6">Expression largely restricted to adipose tissue and spleen. Expressed on mature neutrophils but not on immature neutrophils or eosinophils.</text>
</comment>
<comment type="developmental stage">
    <text evidence="6">Expression in neutrophils occurs in the late terminal differentiation phase.</text>
</comment>
<comment type="similarity">
    <text evidence="3">Belongs to the G-protein coupled receptor 1 family.</text>
</comment>
<reference key="1">
    <citation type="journal article" date="2003" name="J. Biol. Chem.">
        <title>Molecular identification of high and low affinity receptors for nicotinic acid.</title>
        <authorList>
            <person name="Wise A."/>
            <person name="Foord S.M."/>
            <person name="Fraser N.J."/>
            <person name="Barnes A.A."/>
            <person name="Elshourbagy N."/>
            <person name="Eilert M."/>
            <person name="Ignar D.M."/>
            <person name="Murdock P.R."/>
            <person name="Steplewski K."/>
            <person name="Green A."/>
            <person name="Brown A.J."/>
            <person name="Dowell S.J."/>
            <person name="Szekeres P.G."/>
            <person name="Hassall D.G."/>
            <person name="Marshall F.H."/>
            <person name="Wilson S."/>
            <person name="Pike N.B."/>
        </authorList>
    </citation>
    <scope>NUCLEOTIDE SEQUENCE [MRNA]</scope>
    <scope>TISSUE SPECIFICITY</scope>
    <scope>CHARACTERIZATION</scope>
</reference>
<reference key="2">
    <citation type="journal article" date="2002" name="FEBS Lett.">
        <title>Identification of G protein-coupled receptor genes from the human genome sequence.</title>
        <authorList>
            <person name="Takeda S."/>
            <person name="Kadowaki S."/>
            <person name="Haga T."/>
            <person name="Takaesu H."/>
            <person name="Mitaku S."/>
        </authorList>
    </citation>
    <scope>NUCLEOTIDE SEQUENCE [LARGE SCALE GENOMIC DNA]</scope>
</reference>
<reference key="3">
    <citation type="submission" date="2001-07" db="EMBL/GenBank/DDBJ databases">
        <title>Genome-wide discovery and analysis of human seven transmembrane helix receptor genes.</title>
        <authorList>
            <person name="Suwa M."/>
            <person name="Sato T."/>
            <person name="Okouchi I."/>
            <person name="Arita M."/>
            <person name="Futami K."/>
            <person name="Matsumoto S."/>
            <person name="Tsutsumi S."/>
            <person name="Aburatani H."/>
            <person name="Asai K."/>
            <person name="Akiyama Y."/>
        </authorList>
    </citation>
    <scope>NUCLEOTIDE SEQUENCE [GENOMIC DNA]</scope>
</reference>
<reference key="4">
    <citation type="submission" date="2007-07" db="EMBL/GenBank/DDBJ databases">
        <authorList>
            <consortium name="SeattleSNPs variation discovery resource"/>
        </authorList>
    </citation>
    <scope>NUCLEOTIDE SEQUENCE [GENOMIC DNA]</scope>
    <scope>VARIANTS CYS-311 AND ILE-317</scope>
</reference>
<reference key="5">
    <citation type="journal article" date="2004" name="Genome Res.">
        <title>The status, quality, and expansion of the NIH full-length cDNA project: the Mammalian Gene Collection (MGC).</title>
        <authorList>
            <consortium name="The MGC Project Team"/>
        </authorList>
    </citation>
    <scope>NUCLEOTIDE SEQUENCE [LARGE SCALE MRNA]</scope>
    <source>
        <tissue>Pancreas</tissue>
    </source>
</reference>
<reference key="6">
    <citation type="journal article" date="2008" name="Cell Death Differ.">
        <title>Neutrophil apoptosis mediated by nicotinic acid receptors (GPR109A).</title>
        <authorList>
            <person name="Kostylina G."/>
            <person name="Simon D."/>
            <person name="Fey M.F."/>
            <person name="Yousefi S."/>
            <person name="Simon H.U."/>
        </authorList>
    </citation>
    <scope>FUNCTION</scope>
    <scope>SUBCELLULAR LOCATION</scope>
    <scope>TISSUE SPECIFICITY</scope>
    <scope>DEVELOPMENTAL STAGE</scope>
</reference>
<reference key="7">
    <citation type="journal article" date="2011" name="Pharmacol. Rev.">
        <title>International union of basic and clinical pharmacology. LXXXII: nomenclature and classification of hydroxy-carboxylic acid receptors (GPR81, GPR109A, and GPR109B).</title>
        <authorList>
            <person name="Offermanns S."/>
            <person name="Colletti S.L."/>
            <person name="Lovenberg T.W."/>
            <person name="Semple G."/>
            <person name="Wise A."/>
            <person name="Ijzerman A.P."/>
        </authorList>
    </citation>
    <scope>NOMENCLATURE</scope>
</reference>
<proteinExistence type="evidence at protein level"/>
<feature type="chain" id="PRO_0000069603" description="Hydroxycarboxylic acid receptor 2">
    <location>
        <begin position="1"/>
        <end position="363"/>
    </location>
</feature>
<feature type="topological domain" description="Extracellular" evidence="2">
    <location>
        <begin position="1"/>
        <end position="33"/>
    </location>
</feature>
<feature type="transmembrane region" description="Helical; Name=1" evidence="2">
    <location>
        <begin position="34"/>
        <end position="54"/>
    </location>
</feature>
<feature type="topological domain" description="Cytoplasmic" evidence="2">
    <location>
        <begin position="55"/>
        <end position="63"/>
    </location>
</feature>
<feature type="transmembrane region" description="Helical; Name=2" evidence="2">
    <location>
        <begin position="64"/>
        <end position="84"/>
    </location>
</feature>
<feature type="topological domain" description="Extracellular" evidence="2">
    <location>
        <begin position="85"/>
        <end position="102"/>
    </location>
</feature>
<feature type="transmembrane region" description="Helical; Name=3" evidence="2">
    <location>
        <begin position="103"/>
        <end position="123"/>
    </location>
</feature>
<feature type="topological domain" description="Cytoplasmic" evidence="2">
    <location>
        <begin position="124"/>
        <end position="142"/>
    </location>
</feature>
<feature type="transmembrane region" description="Helical; Name=4" evidence="2">
    <location>
        <begin position="143"/>
        <end position="163"/>
    </location>
</feature>
<feature type="topological domain" description="Extracellular" evidence="2">
    <location>
        <begin position="164"/>
        <end position="192"/>
    </location>
</feature>
<feature type="transmembrane region" description="Helical; Name=5" evidence="2">
    <location>
        <begin position="193"/>
        <end position="213"/>
    </location>
</feature>
<feature type="topological domain" description="Cytoplasmic" evidence="2">
    <location>
        <begin position="214"/>
        <end position="229"/>
    </location>
</feature>
<feature type="transmembrane region" description="Helical; Name=6" evidence="2">
    <location>
        <begin position="230"/>
        <end position="250"/>
    </location>
</feature>
<feature type="topological domain" description="Extracellular" evidence="2">
    <location>
        <begin position="251"/>
        <end position="273"/>
    </location>
</feature>
<feature type="transmembrane region" description="Helical; Name=7" evidence="2">
    <location>
        <begin position="274"/>
        <end position="294"/>
    </location>
</feature>
<feature type="topological domain" description="Cytoplasmic" evidence="2">
    <location>
        <begin position="295"/>
        <end position="363"/>
    </location>
</feature>
<feature type="region of interest" description="Disordered" evidence="4">
    <location>
        <begin position="319"/>
        <end position="363"/>
    </location>
</feature>
<feature type="modified residue" description="Phosphoserine" evidence="1">
    <location>
        <position position="328"/>
    </location>
</feature>
<feature type="disulfide bond" evidence="3">
    <location>
        <begin position="100"/>
        <end position="177"/>
    </location>
</feature>
<feature type="sequence variant" id="VAR_049400" description="In dbSNP:rs676770.">
    <original>Q</original>
    <variation>R</variation>
    <location>
        <position position="187"/>
    </location>
</feature>
<feature type="sequence variant" id="VAR_049401" description="In dbSNP:rs676823.">
    <original>F</original>
    <variation>L</variation>
    <location>
        <position position="198"/>
    </location>
</feature>
<feature type="sequence variant" id="VAR_038713" description="In dbSNP:rs7314976." evidence="7">
    <original>R</original>
    <variation>C</variation>
    <location>
        <position position="311"/>
    </location>
</feature>
<feature type="sequence variant" id="VAR_038714" description="In dbSNP:rs2454727." evidence="7">
    <original>M</original>
    <variation>I</variation>
    <location>
        <position position="317"/>
    </location>
</feature>
<feature type="strand" evidence="11">
    <location>
        <begin position="10"/>
        <end position="12"/>
    </location>
</feature>
<feature type="strand" evidence="12">
    <location>
        <begin position="13"/>
        <end position="15"/>
    </location>
</feature>
<feature type="strand" evidence="13">
    <location>
        <begin position="17"/>
        <end position="19"/>
    </location>
</feature>
<feature type="helix" evidence="12">
    <location>
        <begin position="24"/>
        <end position="53"/>
    </location>
</feature>
<feature type="helix" evidence="12">
    <location>
        <begin position="61"/>
        <end position="77"/>
    </location>
</feature>
<feature type="helix" evidence="12">
    <location>
        <begin position="80"/>
        <end position="88"/>
    </location>
</feature>
<feature type="turn" evidence="8">
    <location>
        <begin position="89"/>
        <end position="91"/>
    </location>
</feature>
<feature type="helix" evidence="12">
    <location>
        <begin position="98"/>
        <end position="129"/>
    </location>
</feature>
<feature type="strand" evidence="9">
    <location>
        <begin position="132"/>
        <end position="134"/>
    </location>
</feature>
<feature type="helix" evidence="12">
    <location>
        <begin position="135"/>
        <end position="138"/>
    </location>
</feature>
<feature type="helix" evidence="12">
    <location>
        <begin position="141"/>
        <end position="159"/>
    </location>
</feature>
<feature type="helix" evidence="12">
    <location>
        <begin position="160"/>
        <end position="164"/>
    </location>
</feature>
<feature type="strand" evidence="14">
    <location>
        <begin position="171"/>
        <end position="173"/>
    </location>
</feature>
<feature type="strand" evidence="10">
    <location>
        <begin position="174"/>
        <end position="176"/>
    </location>
</feature>
<feature type="strand" evidence="13">
    <location>
        <begin position="183"/>
        <end position="185"/>
    </location>
</feature>
<feature type="helix" evidence="12">
    <location>
        <begin position="188"/>
        <end position="217"/>
    </location>
</feature>
<feature type="helix" evidence="12">
    <location>
        <begin position="220"/>
        <end position="222"/>
    </location>
</feature>
<feature type="helix" evidence="12">
    <location>
        <begin position="224"/>
        <end position="260"/>
    </location>
</feature>
<feature type="strand" evidence="12">
    <location>
        <begin position="263"/>
        <end position="265"/>
    </location>
</feature>
<feature type="helix" evidence="12">
    <location>
        <begin position="266"/>
        <end position="268"/>
    </location>
</feature>
<feature type="helix" evidence="12">
    <location>
        <begin position="269"/>
        <end position="294"/>
    </location>
</feature>
<feature type="turn" evidence="12">
    <location>
        <begin position="295"/>
        <end position="297"/>
    </location>
</feature>
<feature type="helix" evidence="8">
    <location>
        <begin position="300"/>
        <end position="311"/>
    </location>
</feature>
<gene>
    <name type="primary">HCAR2</name>
    <name type="synonym">GPR109A</name>
    <name type="synonym">HCA2</name>
    <name type="synonym">HM74A</name>
    <name type="synonym">NIACR1</name>
</gene>
<protein>
    <recommendedName>
        <fullName>Hydroxycarboxylic acid receptor 2</fullName>
    </recommendedName>
    <alternativeName>
        <fullName>G-protein coupled receptor 109A</fullName>
    </alternativeName>
    <alternativeName>
        <fullName>G-protein coupled receptor HM74A</fullName>
    </alternativeName>
    <alternativeName>
        <fullName>Niacin receptor 1</fullName>
    </alternativeName>
    <alternativeName>
        <fullName>Nicotinic acid receptor</fullName>
    </alternativeName>
</protein>
<keyword id="KW-0002">3D-structure</keyword>
<keyword id="KW-0053">Apoptosis</keyword>
<keyword id="KW-1003">Cell membrane</keyword>
<keyword id="KW-1015">Disulfide bond</keyword>
<keyword id="KW-0297">G-protein coupled receptor</keyword>
<keyword id="KW-0472">Membrane</keyword>
<keyword id="KW-0597">Phosphoprotein</keyword>
<keyword id="KW-1267">Proteomics identification</keyword>
<keyword id="KW-0675">Receptor</keyword>
<keyword id="KW-1185">Reference proteome</keyword>
<keyword id="KW-0807">Transducer</keyword>
<keyword id="KW-0812">Transmembrane</keyword>
<keyword id="KW-1133">Transmembrane helix</keyword>
<evidence type="ECO:0000250" key="1">
    <source>
        <dbReference type="UniProtKB" id="Q9EP66"/>
    </source>
</evidence>
<evidence type="ECO:0000255" key="2"/>
<evidence type="ECO:0000255" key="3">
    <source>
        <dbReference type="PROSITE-ProRule" id="PRU00521"/>
    </source>
</evidence>
<evidence type="ECO:0000256" key="4">
    <source>
        <dbReference type="SAM" id="MobiDB-lite"/>
    </source>
</evidence>
<evidence type="ECO:0000269" key="5">
    <source>
    </source>
</evidence>
<evidence type="ECO:0000269" key="6">
    <source>
    </source>
</evidence>
<evidence type="ECO:0000269" key="7">
    <source ref="4"/>
</evidence>
<evidence type="ECO:0007829" key="8">
    <source>
        <dbReference type="PDB" id="7ZL9"/>
    </source>
</evidence>
<evidence type="ECO:0007829" key="9">
    <source>
        <dbReference type="PDB" id="8I7V"/>
    </source>
</evidence>
<evidence type="ECO:0007829" key="10">
    <source>
        <dbReference type="PDB" id="8IHF"/>
    </source>
</evidence>
<evidence type="ECO:0007829" key="11">
    <source>
        <dbReference type="PDB" id="8IJA"/>
    </source>
</evidence>
<evidence type="ECO:0007829" key="12">
    <source>
        <dbReference type="PDB" id="8J6P"/>
    </source>
</evidence>
<evidence type="ECO:0007829" key="13">
    <source>
        <dbReference type="PDB" id="8J6Q"/>
    </source>
</evidence>
<evidence type="ECO:0007829" key="14">
    <source>
        <dbReference type="PDB" id="8JZ7"/>
    </source>
</evidence>
<accession>Q8TDS4</accession>
<accession>A0PJL5</accession>
<accession>A7LGG3</accession>
<dbReference type="EMBL" id="AY148884">
    <property type="protein sequence ID" value="AAN71621.1"/>
    <property type="molecule type" value="mRNA"/>
</dbReference>
<dbReference type="EMBL" id="AB083632">
    <property type="protein sequence ID" value="BAB89345.1"/>
    <property type="molecule type" value="Genomic_DNA"/>
</dbReference>
<dbReference type="EMBL" id="AB065876">
    <property type="protein sequence ID" value="BAC06094.1"/>
    <property type="molecule type" value="Genomic_DNA"/>
</dbReference>
<dbReference type="EMBL" id="EU012026">
    <property type="protein sequence ID" value="ABS29270.1"/>
    <property type="molecule type" value="Genomic_DNA"/>
</dbReference>
<dbReference type="EMBL" id="BC027965">
    <property type="protein sequence ID" value="AAH27965.1"/>
    <property type="molecule type" value="mRNA"/>
</dbReference>
<dbReference type="EMBL" id="BC056419">
    <property type="protein sequence ID" value="AAH56419.1"/>
    <property type="molecule type" value="mRNA"/>
</dbReference>
<dbReference type="CCDS" id="CCDS9235.1"/>
<dbReference type="RefSeq" id="NP_808219.1">
    <property type="nucleotide sequence ID" value="NM_177551.4"/>
</dbReference>
<dbReference type="PDB" id="7XK2">
    <property type="method" value="EM"/>
    <property type="resolution" value="3.10 A"/>
    <property type="chains" value="R=1-325"/>
</dbReference>
<dbReference type="PDB" id="7ZL9">
    <property type="method" value="X-ray"/>
    <property type="resolution" value="2.70 A"/>
    <property type="chains" value="A=1-325"/>
</dbReference>
<dbReference type="PDB" id="7ZLY">
    <property type="method" value="X-ray"/>
    <property type="resolution" value="2.70 A"/>
    <property type="chains" value="A=1-325"/>
</dbReference>
<dbReference type="PDB" id="8H2G">
    <property type="method" value="EM"/>
    <property type="resolution" value="3.01 A"/>
    <property type="chains" value="A=1-363"/>
</dbReference>
<dbReference type="PDB" id="8I7V">
    <property type="method" value="EM"/>
    <property type="resolution" value="2.77 A"/>
    <property type="chains" value="A=1-363"/>
</dbReference>
<dbReference type="PDB" id="8I7W">
    <property type="method" value="EM"/>
    <property type="resolution" value="3.39 A"/>
    <property type="chains" value="A=1-363"/>
</dbReference>
<dbReference type="PDB" id="8IHB">
    <property type="method" value="EM"/>
    <property type="resolution" value="2.85 A"/>
    <property type="chains" value="R=2-363"/>
</dbReference>
<dbReference type="PDB" id="8IHF">
    <property type="method" value="EM"/>
    <property type="resolution" value="2.97 A"/>
    <property type="chains" value="R=2-363"/>
</dbReference>
<dbReference type="PDB" id="8IHH">
    <property type="method" value="EM"/>
    <property type="resolution" value="3.06 A"/>
    <property type="chains" value="R=2-363"/>
</dbReference>
<dbReference type="PDB" id="8IHI">
    <property type="method" value="EM"/>
    <property type="resolution" value="3.11 A"/>
    <property type="chains" value="R=2-363"/>
</dbReference>
<dbReference type="PDB" id="8IJ3">
    <property type="method" value="EM"/>
    <property type="resolution" value="3.28 A"/>
    <property type="chains" value="A=8-299"/>
</dbReference>
<dbReference type="PDB" id="8IJA">
    <property type="method" value="EM"/>
    <property type="resolution" value="2.69 A"/>
    <property type="chains" value="A=8-301"/>
</dbReference>
<dbReference type="PDB" id="8IJB">
    <property type="method" value="EM"/>
    <property type="resolution" value="3.23 A"/>
    <property type="chains" value="A=8-301"/>
</dbReference>
<dbReference type="PDB" id="8IJD">
    <property type="method" value="EM"/>
    <property type="resolution" value="3.25 A"/>
    <property type="chains" value="A=8-301"/>
</dbReference>
<dbReference type="PDB" id="8IY9">
    <property type="method" value="EM"/>
    <property type="resolution" value="3.37 A"/>
    <property type="chains" value="R=4-363"/>
</dbReference>
<dbReference type="PDB" id="8IYH">
    <property type="method" value="EM"/>
    <property type="resolution" value="3.30 A"/>
    <property type="chains" value="D=2-363"/>
</dbReference>
<dbReference type="PDB" id="8IYW">
    <property type="method" value="EM"/>
    <property type="resolution" value="3.45 A"/>
    <property type="chains" value="R=4-363"/>
</dbReference>
<dbReference type="PDB" id="8J6I">
    <property type="method" value="EM"/>
    <property type="resolution" value="2.92 A"/>
    <property type="chains" value="R=1-311"/>
</dbReference>
<dbReference type="PDB" id="8J6J">
    <property type="method" value="EM"/>
    <property type="resolution" value="2.80 A"/>
    <property type="chains" value="R=1-331"/>
</dbReference>
<dbReference type="PDB" id="8J6L">
    <property type="method" value="EM"/>
    <property type="resolution" value="3.05 A"/>
    <property type="chains" value="R=1-331"/>
</dbReference>
<dbReference type="PDB" id="8J6P">
    <property type="method" value="EM"/>
    <property type="resolution" value="2.55 A"/>
    <property type="chains" value="R=8-301"/>
</dbReference>
<dbReference type="PDB" id="8J6Q">
    <property type="method" value="EM"/>
    <property type="resolution" value="2.60 A"/>
    <property type="chains" value="R=8-301"/>
</dbReference>
<dbReference type="PDB" id="8J6R">
    <property type="method" value="EM"/>
    <property type="resolution" value="2.76 A"/>
    <property type="chains" value="R=8-301"/>
</dbReference>
<dbReference type="PDB" id="8JER">
    <property type="method" value="EM"/>
    <property type="resolution" value="3.45 A"/>
    <property type="chains" value="R=2-363"/>
</dbReference>
<dbReference type="PDB" id="8JHN">
    <property type="method" value="EM"/>
    <property type="resolution" value="3.75 A"/>
    <property type="chains" value="D=2-363"/>
</dbReference>
<dbReference type="PDB" id="8JHY">
    <property type="method" value="EM"/>
    <property type="resolution" value="2.87 A"/>
    <property type="chains" value="A=1-363"/>
</dbReference>
<dbReference type="PDB" id="8JII">
    <property type="method" value="EM"/>
    <property type="resolution" value="3.17 A"/>
    <property type="chains" value="A=1-363"/>
</dbReference>
<dbReference type="PDB" id="8JIL">
    <property type="method" value="EM"/>
    <property type="resolution" value="3.50 A"/>
    <property type="chains" value="A=1-363"/>
</dbReference>
<dbReference type="PDB" id="8JIM">
    <property type="method" value="EM"/>
    <property type="resolution" value="2.98 A"/>
    <property type="chains" value="E=1-363"/>
</dbReference>
<dbReference type="PDB" id="8JZ7">
    <property type="method" value="EM"/>
    <property type="resolution" value="2.60 A"/>
    <property type="chains" value="A=1-363"/>
</dbReference>
<dbReference type="PDB" id="8K5B">
    <property type="method" value="EM"/>
    <property type="resolution" value="3.43 A"/>
    <property type="chains" value="A=1-363"/>
</dbReference>
<dbReference type="PDB" id="8K5C">
    <property type="method" value="EM"/>
    <property type="resolution" value="3.13 A"/>
    <property type="chains" value="A=1-363"/>
</dbReference>
<dbReference type="PDB" id="8K5D">
    <property type="method" value="EM"/>
    <property type="resolution" value="3.74 A"/>
    <property type="chains" value="A=1-363"/>
</dbReference>
<dbReference type="PDB" id="8UTD">
    <property type="method" value="EM"/>
    <property type="resolution" value="3.24 A"/>
    <property type="chains" value="R=1-363"/>
</dbReference>
<dbReference type="PDB" id="9IQT">
    <property type="method" value="EM"/>
    <property type="resolution" value="2.90 A"/>
    <property type="chains" value="R=1-363"/>
</dbReference>
<dbReference type="PDBsum" id="7XK2"/>
<dbReference type="PDBsum" id="7ZL9"/>
<dbReference type="PDBsum" id="7ZLY"/>
<dbReference type="PDBsum" id="8H2G"/>
<dbReference type="PDBsum" id="8I7V"/>
<dbReference type="PDBsum" id="8I7W"/>
<dbReference type="PDBsum" id="8IHB"/>
<dbReference type="PDBsum" id="8IHF"/>
<dbReference type="PDBsum" id="8IHH"/>
<dbReference type="PDBsum" id="8IHI"/>
<dbReference type="PDBsum" id="8IJ3"/>
<dbReference type="PDBsum" id="8IJA"/>
<dbReference type="PDBsum" id="8IJB"/>
<dbReference type="PDBsum" id="8IJD"/>
<dbReference type="PDBsum" id="8IY9"/>
<dbReference type="PDBsum" id="8IYH"/>
<dbReference type="PDBsum" id="8IYW"/>
<dbReference type="PDBsum" id="8J6I"/>
<dbReference type="PDBsum" id="8J6J"/>
<dbReference type="PDBsum" id="8J6L"/>
<dbReference type="PDBsum" id="8J6P"/>
<dbReference type="PDBsum" id="8J6Q"/>
<dbReference type="PDBsum" id="8J6R"/>
<dbReference type="PDBsum" id="8JER"/>
<dbReference type="PDBsum" id="8JHN"/>
<dbReference type="PDBsum" id="8JHY"/>
<dbReference type="PDBsum" id="8JII"/>
<dbReference type="PDBsum" id="8JIL"/>
<dbReference type="PDBsum" id="8JIM"/>
<dbReference type="PDBsum" id="8JZ7"/>
<dbReference type="PDBsum" id="8K5B"/>
<dbReference type="PDBsum" id="8K5C"/>
<dbReference type="PDBsum" id="8K5D"/>
<dbReference type="PDBsum" id="8UTD"/>
<dbReference type="PDBsum" id="9IQT"/>
<dbReference type="EMDB" id="EMD-33241"/>
<dbReference type="EMDB" id="EMD-34437"/>
<dbReference type="EMDB" id="EMD-35234"/>
<dbReference type="EMDB" id="EMD-35235"/>
<dbReference type="EMDB" id="EMD-35442"/>
<dbReference type="EMDB" id="EMD-35443"/>
<dbReference type="EMDB" id="EMD-35444"/>
<dbReference type="EMDB" id="EMD-35445"/>
<dbReference type="EMDB" id="EMD-35463"/>
<dbReference type="EMDB" id="EMD-35483"/>
<dbReference type="EMDB" id="EMD-35484"/>
<dbReference type="EMDB" id="EMD-35485"/>
<dbReference type="EMDB" id="EMD-35817"/>
<dbReference type="EMDB" id="EMD-35822"/>
<dbReference type="EMDB" id="EMD-35831"/>
<dbReference type="EMDB" id="EMD-36005"/>
<dbReference type="EMDB" id="EMD-36006"/>
<dbReference type="EMDB" id="EMD-36007"/>
<dbReference type="EMDB" id="EMD-36010"/>
<dbReference type="EMDB" id="EMD-36011"/>
<dbReference type="EMDB" id="EMD-36012"/>
<dbReference type="EMDB" id="EMD-36193"/>
<dbReference type="EMDB" id="EMD-36280"/>
<dbReference type="EMDB" id="EMD-36300"/>
<dbReference type="EMDB" id="EMD-36312"/>
<dbReference type="EMDB" id="EMD-36317"/>
<dbReference type="EMDB" id="EMD-36318"/>
<dbReference type="EMDB" id="EMD-36736"/>
<dbReference type="EMDB" id="EMD-36900"/>
<dbReference type="EMDB" id="EMD-36901"/>
<dbReference type="EMDB" id="EMD-36902"/>
<dbReference type="EMDB" id="EMD-42538"/>
<dbReference type="EMDB" id="EMD-60795"/>
<dbReference type="SMR" id="Q8TDS4"/>
<dbReference type="CORUM" id="Q8TDS4"/>
<dbReference type="FunCoup" id="Q8TDS4">
    <property type="interactions" value="542"/>
</dbReference>
<dbReference type="STRING" id="9606.ENSP00000375066"/>
<dbReference type="BindingDB" id="Q8TDS4"/>
<dbReference type="ChEMBL" id="CHEMBL3785"/>
<dbReference type="DrugBank" id="DB18313">
    <property type="generic name" value="Cinnamic acid"/>
</dbReference>
<dbReference type="DrugBank" id="DB00257">
    <property type="generic name" value="Clotrimazole"/>
</dbReference>
<dbReference type="DrugBank" id="DB08949">
    <property type="generic name" value="Inositol nicotinate"/>
</dbReference>
<dbReference type="DrugBank" id="DB16884">
    <property type="generic name" value="Isonicotinic acid"/>
</dbReference>
<dbReference type="DrugBank" id="DB05939">
    <property type="generic name" value="MK-0354"/>
</dbReference>
<dbReference type="DrugBank" id="DB00627">
    <property type="generic name" value="Niacin"/>
</dbReference>
<dbReference type="DrugBank" id="DB12433">
    <property type="generic name" value="SCH-900271"/>
</dbReference>
<dbReference type="DrugCentral" id="Q8TDS4"/>
<dbReference type="GuidetoPHARMACOLOGY" id="312"/>
<dbReference type="GlyGen" id="Q8TDS4">
    <property type="glycosylation" value="4 sites"/>
</dbReference>
<dbReference type="iPTMnet" id="Q8TDS4"/>
<dbReference type="PhosphoSitePlus" id="Q8TDS4"/>
<dbReference type="BioMuta" id="HCAR2"/>
<dbReference type="DMDM" id="74762622"/>
<dbReference type="jPOST" id="Q8TDS4"/>
<dbReference type="MassIVE" id="Q8TDS4"/>
<dbReference type="PaxDb" id="9606-ENSP00000375066"/>
<dbReference type="PeptideAtlas" id="Q8TDS4"/>
<dbReference type="ProteomicsDB" id="74335"/>
<dbReference type="Antibodypedia" id="19187">
    <property type="antibodies" value="196 antibodies from 29 providers"/>
</dbReference>
<dbReference type="DNASU" id="338442"/>
<dbReference type="Ensembl" id="ENST00000328880.6">
    <property type="protein sequence ID" value="ENSP00000375066.2"/>
    <property type="gene ID" value="ENSG00000182782.8"/>
</dbReference>
<dbReference type="GeneID" id="338442"/>
<dbReference type="KEGG" id="hsa:338442"/>
<dbReference type="MANE-Select" id="ENST00000328880.6">
    <property type="protein sequence ID" value="ENSP00000375066.2"/>
    <property type="RefSeq nucleotide sequence ID" value="NM_177551.4"/>
    <property type="RefSeq protein sequence ID" value="NP_808219.1"/>
</dbReference>
<dbReference type="UCSC" id="uc001ucx.2">
    <property type="organism name" value="human"/>
</dbReference>
<dbReference type="AGR" id="HGNC:24827"/>
<dbReference type="CTD" id="338442"/>
<dbReference type="DisGeNET" id="338442"/>
<dbReference type="GeneCards" id="HCAR2"/>
<dbReference type="HGNC" id="HGNC:24827">
    <property type="gene designation" value="HCAR2"/>
</dbReference>
<dbReference type="HPA" id="ENSG00000182782">
    <property type="expression patterns" value="Tissue enhanced (esophagus, skin)"/>
</dbReference>
<dbReference type="MIM" id="609163">
    <property type="type" value="gene"/>
</dbReference>
<dbReference type="neXtProt" id="NX_Q8TDS4"/>
<dbReference type="OpenTargets" id="ENSG00000182782"/>
<dbReference type="PharmGKB" id="PA165961843"/>
<dbReference type="VEuPathDB" id="HostDB:ENSG00000182782"/>
<dbReference type="eggNOG" id="KOG3656">
    <property type="taxonomic scope" value="Eukaryota"/>
</dbReference>
<dbReference type="GeneTree" id="ENSGT00990000203619"/>
<dbReference type="HOGENOM" id="CLU_009579_8_2_1"/>
<dbReference type="InParanoid" id="Q8TDS4"/>
<dbReference type="OMA" id="DTFRWHE"/>
<dbReference type="OrthoDB" id="10055255at2759"/>
<dbReference type="PAN-GO" id="Q8TDS4">
    <property type="GO annotations" value="3 GO annotations based on evolutionary models"/>
</dbReference>
<dbReference type="PhylomeDB" id="Q8TDS4"/>
<dbReference type="TreeFam" id="TF330775"/>
<dbReference type="PathwayCommons" id="Q8TDS4"/>
<dbReference type="Reactome" id="R-HSA-3296197">
    <property type="pathway name" value="Hydroxycarboxylic acid-binding receptors"/>
</dbReference>
<dbReference type="Reactome" id="R-HSA-373076">
    <property type="pathway name" value="Class A/1 (Rhodopsin-like receptors)"/>
</dbReference>
<dbReference type="Reactome" id="R-HSA-418594">
    <property type="pathway name" value="G alpha (i) signalling events"/>
</dbReference>
<dbReference type="SIGNOR" id="Q8TDS4"/>
<dbReference type="BioGRID-ORCS" id="338442">
    <property type="hits" value="15 hits in 1139 CRISPR screens"/>
</dbReference>
<dbReference type="GenomeRNAi" id="338442"/>
<dbReference type="Pharos" id="Q8TDS4">
    <property type="development level" value="Tclin"/>
</dbReference>
<dbReference type="PRO" id="PR:Q8TDS4"/>
<dbReference type="Proteomes" id="UP000005640">
    <property type="component" value="Chromosome 12"/>
</dbReference>
<dbReference type="RNAct" id="Q8TDS4">
    <property type="molecule type" value="protein"/>
</dbReference>
<dbReference type="Bgee" id="ENSG00000182782">
    <property type="expression patterns" value="Expressed in blood and 90 other cell types or tissues"/>
</dbReference>
<dbReference type="ExpressionAtlas" id="Q8TDS4">
    <property type="expression patterns" value="baseline and differential"/>
</dbReference>
<dbReference type="GO" id="GO:0030054">
    <property type="term" value="C:cell junction"/>
    <property type="evidence" value="ECO:0000314"/>
    <property type="project" value="HPA"/>
</dbReference>
<dbReference type="GO" id="GO:0005886">
    <property type="term" value="C:plasma membrane"/>
    <property type="evidence" value="ECO:0000314"/>
    <property type="project" value="UniProtKB"/>
</dbReference>
<dbReference type="GO" id="GO:0070553">
    <property type="term" value="F:nicotinic acid receptor activity"/>
    <property type="evidence" value="ECO:0000250"/>
    <property type="project" value="UniProtKB"/>
</dbReference>
<dbReference type="GO" id="GO:0007186">
    <property type="term" value="P:G protein-coupled receptor signaling pathway"/>
    <property type="evidence" value="ECO:0000318"/>
    <property type="project" value="GO_Central"/>
</dbReference>
<dbReference type="GO" id="GO:0050995">
    <property type="term" value="P:negative regulation of lipid catabolic process"/>
    <property type="evidence" value="ECO:0000250"/>
    <property type="project" value="UniProtKB"/>
</dbReference>
<dbReference type="GO" id="GO:0001781">
    <property type="term" value="P:neutrophil apoptotic process"/>
    <property type="evidence" value="ECO:0000314"/>
    <property type="project" value="UniProtKB"/>
</dbReference>
<dbReference type="GO" id="GO:0070165">
    <property type="term" value="P:positive regulation of adiponectin secretion"/>
    <property type="evidence" value="ECO:0000250"/>
    <property type="project" value="UniProtKB"/>
</dbReference>
<dbReference type="GO" id="GO:0033031">
    <property type="term" value="P:positive regulation of neutrophil apoptotic process"/>
    <property type="evidence" value="ECO:0000314"/>
    <property type="project" value="UniProtKB"/>
</dbReference>
<dbReference type="CDD" id="cd15201">
    <property type="entry name" value="7tmA_HCAR1-3"/>
    <property type="match status" value="1"/>
</dbReference>
<dbReference type="FunFam" id="1.20.1070.10:FF:000241">
    <property type="entry name" value="Hydroxycarboxylic acid receptor 1"/>
    <property type="match status" value="1"/>
</dbReference>
<dbReference type="Gene3D" id="1.20.1070.10">
    <property type="entry name" value="Rhodopsin 7-helix transmembrane proteins"/>
    <property type="match status" value="1"/>
</dbReference>
<dbReference type="InterPro" id="IPR000276">
    <property type="entry name" value="GPCR_Rhodpsn"/>
</dbReference>
<dbReference type="InterPro" id="IPR017452">
    <property type="entry name" value="GPCR_Rhodpsn_7TM"/>
</dbReference>
<dbReference type="InterPro" id="IPR051893">
    <property type="entry name" value="HCARs"/>
</dbReference>
<dbReference type="PANTHER" id="PTHR46048">
    <property type="entry name" value="HYDROXYCARBOXYLIC ACID RECEPTOR 2"/>
    <property type="match status" value="1"/>
</dbReference>
<dbReference type="PANTHER" id="PTHR46048:SF6">
    <property type="entry name" value="HYDROXYCARBOXYLIC ACID RECEPTOR 2"/>
    <property type="match status" value="1"/>
</dbReference>
<dbReference type="Pfam" id="PF00001">
    <property type="entry name" value="7tm_1"/>
    <property type="match status" value="1"/>
</dbReference>
<dbReference type="PRINTS" id="PR00237">
    <property type="entry name" value="GPCRRHODOPSN"/>
</dbReference>
<dbReference type="PRINTS" id="PR01157">
    <property type="entry name" value="P2YPURNOCPTR"/>
</dbReference>
<dbReference type="SUPFAM" id="SSF81321">
    <property type="entry name" value="Family A G protein-coupled receptor-like"/>
    <property type="match status" value="1"/>
</dbReference>
<dbReference type="PROSITE" id="PS00237">
    <property type="entry name" value="G_PROTEIN_RECEP_F1_1"/>
    <property type="match status" value="1"/>
</dbReference>
<dbReference type="PROSITE" id="PS50262">
    <property type="entry name" value="G_PROTEIN_RECEP_F1_2"/>
    <property type="match status" value="1"/>
</dbReference>
<name>HCAR2_HUMAN</name>